<sequence length="582" mass="66705">MEAANCSLRVKRPLLDPRFEGYKLSLEPLPCYQLELDAAVAEVKLRDDQYTLEHMHAFGMYNYLHCDAWYQDSVYYIDNLGRIMNLTVMLDTALGKPREVFRLPTDVTAYDNRLCASIHFTSPSWVTLSDGTGRLYVIGTGDRGNSPEKWEIMFNEELGNPFIIIHSISLLKAEEHSVAILLLRIEKEELDLKGSGFYVSLEWVVVTKKKEDSKKYEITKHHVLRGKSVPHYAAIEPNGNGLMIVSYKSFKVISGDQDLEENMDEDRPEKIKVEPLYYWQQSEDDLTVTVRLPESSTKEDIQIQFLPDNINIKLKDIQVLEGKLYSSIDHEGSTWTIKENDSLEISLIKKNEGLMWPELVVGDKQGELLRDPAQCAAIAERLMHLTSDELNPNPDKEKPACNAQELEECDIFFEESSSLCRFDGNTLQTTHVVNLGSNQYLFSVIVDPKEMPCFCLRHDVDALLWQPHCSKQDDMWEHIATFNALGYVQASKRDKKFFACAPNYSYAALCECLRRVFIYRQPTPMSTVLYNRKEGRHVGQVAKQQVASLETNDPILGFQATNERLFVLTTKNLFLIRVNTEN</sequence>
<dbReference type="EMBL" id="AF521132">
    <property type="protein sequence ID" value="AAQ08822.1"/>
    <property type="molecule type" value="mRNA"/>
</dbReference>
<dbReference type="EMBL" id="AK077673">
    <property type="protein sequence ID" value="BAC36947.1"/>
    <property type="molecule type" value="mRNA"/>
</dbReference>
<dbReference type="EMBL" id="AK167855">
    <property type="protein sequence ID" value="BAE39873.1"/>
    <property type="molecule type" value="mRNA"/>
</dbReference>
<dbReference type="EMBL" id="AK168122">
    <property type="protein sequence ID" value="BAE40093.1"/>
    <property type="molecule type" value="mRNA"/>
</dbReference>
<dbReference type="EMBL" id="BC031583">
    <property type="protein sequence ID" value="AAH31583.1"/>
    <property type="molecule type" value="mRNA"/>
</dbReference>
<dbReference type="CCDS" id="CCDS27455.1"/>
<dbReference type="RefSeq" id="NP_001107026.1">
    <property type="nucleotide sequence ID" value="NM_001113554.1"/>
</dbReference>
<dbReference type="RefSeq" id="NP_080425.3">
    <property type="nucleotide sequence ID" value="NM_026149.4"/>
</dbReference>
<dbReference type="SMR" id="Q6PIP5"/>
<dbReference type="BioGRID" id="212180">
    <property type="interactions" value="12"/>
</dbReference>
<dbReference type="FunCoup" id="Q6PIP5">
    <property type="interactions" value="4440"/>
</dbReference>
<dbReference type="STRING" id="10090.ENSMUSP00000154478"/>
<dbReference type="GlyGen" id="Q6PIP5">
    <property type="glycosylation" value="2 sites, 1 N-linked glycan (1 site), 1 O-linked glycan (1 site)"/>
</dbReference>
<dbReference type="iPTMnet" id="Q6PIP5"/>
<dbReference type="PhosphoSitePlus" id="Q6PIP5"/>
<dbReference type="SwissPalm" id="Q6PIP5"/>
<dbReference type="PaxDb" id="10090-ENSMUSP00000042746"/>
<dbReference type="PeptideAtlas" id="Q6PIP5"/>
<dbReference type="ProteomicsDB" id="293812"/>
<dbReference type="Pumba" id="Q6PIP5"/>
<dbReference type="Antibodypedia" id="13450">
    <property type="antibodies" value="111 antibodies from 22 providers"/>
</dbReference>
<dbReference type="DNASU" id="67429"/>
<dbReference type="Ensembl" id="ENSMUST00000227843.2">
    <property type="protein sequence ID" value="ENSMUSP00000154478.2"/>
    <property type="gene ID" value="ENSMUSG00000038736.11"/>
</dbReference>
<dbReference type="GeneID" id="67429"/>
<dbReference type="KEGG" id="mmu:67429"/>
<dbReference type="UCSC" id="uc007vpq.2">
    <property type="organism name" value="mouse"/>
</dbReference>
<dbReference type="AGR" id="MGI:1914679"/>
<dbReference type="CTD" id="84955"/>
<dbReference type="MGI" id="MGI:1914679">
    <property type="gene designation" value="Nudcd1"/>
</dbReference>
<dbReference type="VEuPathDB" id="HostDB:ENSMUSG00000038736"/>
<dbReference type="eggNOG" id="KOG4379">
    <property type="taxonomic scope" value="Eukaryota"/>
</dbReference>
<dbReference type="GeneTree" id="ENSGT00390000007776"/>
<dbReference type="HOGENOM" id="CLU_021010_1_0_1"/>
<dbReference type="InParanoid" id="Q6PIP5"/>
<dbReference type="OMA" id="DTRFVHH"/>
<dbReference type="OrthoDB" id="428655at2759"/>
<dbReference type="PhylomeDB" id="Q6PIP5"/>
<dbReference type="TreeFam" id="TF323350"/>
<dbReference type="BioGRID-ORCS" id="67429">
    <property type="hits" value="7 hits in 81 CRISPR screens"/>
</dbReference>
<dbReference type="ChiTaRS" id="Nudcd1">
    <property type="organism name" value="mouse"/>
</dbReference>
<dbReference type="PRO" id="PR:Q6PIP5"/>
<dbReference type="Proteomes" id="UP000000589">
    <property type="component" value="Chromosome 15"/>
</dbReference>
<dbReference type="RNAct" id="Q6PIP5">
    <property type="molecule type" value="protein"/>
</dbReference>
<dbReference type="Bgee" id="ENSMUSG00000038736">
    <property type="expression patterns" value="Expressed in primitive streak and 238 other cell types or tissues"/>
</dbReference>
<dbReference type="ExpressionAtlas" id="Q6PIP5">
    <property type="expression patterns" value="baseline and differential"/>
</dbReference>
<dbReference type="GO" id="GO:0005829">
    <property type="term" value="C:cytosol"/>
    <property type="evidence" value="ECO:0007669"/>
    <property type="project" value="Ensembl"/>
</dbReference>
<dbReference type="GO" id="GO:0005654">
    <property type="term" value="C:nucleoplasm"/>
    <property type="evidence" value="ECO:0007669"/>
    <property type="project" value="Ensembl"/>
</dbReference>
<dbReference type="FunFam" id="2.60.40.790:FF:000032">
    <property type="entry name" value="NudC domain containing 1"/>
    <property type="match status" value="1"/>
</dbReference>
<dbReference type="Gene3D" id="2.60.40.790">
    <property type="match status" value="1"/>
</dbReference>
<dbReference type="InterPro" id="IPR007052">
    <property type="entry name" value="CS_dom"/>
</dbReference>
<dbReference type="InterPro" id="IPR008978">
    <property type="entry name" value="HSP20-like_chaperone"/>
</dbReference>
<dbReference type="InterPro" id="IPR037895">
    <property type="entry name" value="NUDCD1"/>
</dbReference>
<dbReference type="PANTHER" id="PTHR21664">
    <property type="entry name" value="CHRONIC MYELOGENOUS LEUKEMIA TUMOR ANTIGEN 66"/>
    <property type="match status" value="1"/>
</dbReference>
<dbReference type="PANTHER" id="PTHR21664:SF1">
    <property type="entry name" value="NUDC DOMAIN-CONTAINING PROTEIN 1"/>
    <property type="match status" value="1"/>
</dbReference>
<dbReference type="Pfam" id="PF04969">
    <property type="entry name" value="CS"/>
    <property type="match status" value="1"/>
</dbReference>
<dbReference type="SUPFAM" id="SSF49764">
    <property type="entry name" value="HSP20-like chaperones"/>
    <property type="match status" value="1"/>
</dbReference>
<dbReference type="PROSITE" id="PS51203">
    <property type="entry name" value="CS"/>
    <property type="match status" value="1"/>
</dbReference>
<reference evidence="6" key="1">
    <citation type="journal article" date="2004" name="J. Immunol.">
        <title>A novel mechanism of alternative promoter and splicing regulates the epitope generation of tumor antigen CML66-L.</title>
        <authorList>
            <person name="Yan Y."/>
            <person name="Phan L."/>
            <person name="Yang F."/>
            <person name="Talpaz M."/>
            <person name="Yang Y."/>
            <person name="Xiong Z."/>
            <person name="Ng B."/>
            <person name="Timchenko N.A."/>
            <person name="Wu C.J."/>
            <person name="Ritz J."/>
            <person name="Wang H."/>
            <person name="Yang X.-F."/>
        </authorList>
    </citation>
    <scope>NUCLEOTIDE SEQUENCE [MRNA]</scope>
    <source>
        <strain evidence="6">C57BL/6J</strain>
    </source>
</reference>
<reference evidence="8" key="2">
    <citation type="journal article" date="2005" name="Science">
        <title>The transcriptional landscape of the mammalian genome.</title>
        <authorList>
            <person name="Carninci P."/>
            <person name="Kasukawa T."/>
            <person name="Katayama S."/>
            <person name="Gough J."/>
            <person name="Frith M.C."/>
            <person name="Maeda N."/>
            <person name="Oyama R."/>
            <person name="Ravasi T."/>
            <person name="Lenhard B."/>
            <person name="Wells C."/>
            <person name="Kodzius R."/>
            <person name="Shimokawa K."/>
            <person name="Bajic V.B."/>
            <person name="Brenner S.E."/>
            <person name="Batalov S."/>
            <person name="Forrest A.R."/>
            <person name="Zavolan M."/>
            <person name="Davis M.J."/>
            <person name="Wilming L.G."/>
            <person name="Aidinis V."/>
            <person name="Allen J.E."/>
            <person name="Ambesi-Impiombato A."/>
            <person name="Apweiler R."/>
            <person name="Aturaliya R.N."/>
            <person name="Bailey T.L."/>
            <person name="Bansal M."/>
            <person name="Baxter L."/>
            <person name="Beisel K.W."/>
            <person name="Bersano T."/>
            <person name="Bono H."/>
            <person name="Chalk A.M."/>
            <person name="Chiu K.P."/>
            <person name="Choudhary V."/>
            <person name="Christoffels A."/>
            <person name="Clutterbuck D.R."/>
            <person name="Crowe M.L."/>
            <person name="Dalla E."/>
            <person name="Dalrymple B.P."/>
            <person name="de Bono B."/>
            <person name="Della Gatta G."/>
            <person name="di Bernardo D."/>
            <person name="Down T."/>
            <person name="Engstrom P."/>
            <person name="Fagiolini M."/>
            <person name="Faulkner G."/>
            <person name="Fletcher C.F."/>
            <person name="Fukushima T."/>
            <person name="Furuno M."/>
            <person name="Futaki S."/>
            <person name="Gariboldi M."/>
            <person name="Georgii-Hemming P."/>
            <person name="Gingeras T.R."/>
            <person name="Gojobori T."/>
            <person name="Green R.E."/>
            <person name="Gustincich S."/>
            <person name="Harbers M."/>
            <person name="Hayashi Y."/>
            <person name="Hensch T.K."/>
            <person name="Hirokawa N."/>
            <person name="Hill D."/>
            <person name="Huminiecki L."/>
            <person name="Iacono M."/>
            <person name="Ikeo K."/>
            <person name="Iwama A."/>
            <person name="Ishikawa T."/>
            <person name="Jakt M."/>
            <person name="Kanapin A."/>
            <person name="Katoh M."/>
            <person name="Kawasawa Y."/>
            <person name="Kelso J."/>
            <person name="Kitamura H."/>
            <person name="Kitano H."/>
            <person name="Kollias G."/>
            <person name="Krishnan S.P."/>
            <person name="Kruger A."/>
            <person name="Kummerfeld S.K."/>
            <person name="Kurochkin I.V."/>
            <person name="Lareau L.F."/>
            <person name="Lazarevic D."/>
            <person name="Lipovich L."/>
            <person name="Liu J."/>
            <person name="Liuni S."/>
            <person name="McWilliam S."/>
            <person name="Madan Babu M."/>
            <person name="Madera M."/>
            <person name="Marchionni L."/>
            <person name="Matsuda H."/>
            <person name="Matsuzawa S."/>
            <person name="Miki H."/>
            <person name="Mignone F."/>
            <person name="Miyake S."/>
            <person name="Morris K."/>
            <person name="Mottagui-Tabar S."/>
            <person name="Mulder N."/>
            <person name="Nakano N."/>
            <person name="Nakauchi H."/>
            <person name="Ng P."/>
            <person name="Nilsson R."/>
            <person name="Nishiguchi S."/>
            <person name="Nishikawa S."/>
            <person name="Nori F."/>
            <person name="Ohara O."/>
            <person name="Okazaki Y."/>
            <person name="Orlando V."/>
            <person name="Pang K.C."/>
            <person name="Pavan W.J."/>
            <person name="Pavesi G."/>
            <person name="Pesole G."/>
            <person name="Petrovsky N."/>
            <person name="Piazza S."/>
            <person name="Reed J."/>
            <person name="Reid J.F."/>
            <person name="Ring B.Z."/>
            <person name="Ringwald M."/>
            <person name="Rost B."/>
            <person name="Ruan Y."/>
            <person name="Salzberg S.L."/>
            <person name="Sandelin A."/>
            <person name="Schneider C."/>
            <person name="Schoenbach C."/>
            <person name="Sekiguchi K."/>
            <person name="Semple C.A."/>
            <person name="Seno S."/>
            <person name="Sessa L."/>
            <person name="Sheng Y."/>
            <person name="Shibata Y."/>
            <person name="Shimada H."/>
            <person name="Shimada K."/>
            <person name="Silva D."/>
            <person name="Sinclair B."/>
            <person name="Sperling S."/>
            <person name="Stupka E."/>
            <person name="Sugiura K."/>
            <person name="Sultana R."/>
            <person name="Takenaka Y."/>
            <person name="Taki K."/>
            <person name="Tammoja K."/>
            <person name="Tan S.L."/>
            <person name="Tang S."/>
            <person name="Taylor M.S."/>
            <person name="Tegner J."/>
            <person name="Teichmann S.A."/>
            <person name="Ueda H.R."/>
            <person name="van Nimwegen E."/>
            <person name="Verardo R."/>
            <person name="Wei C.L."/>
            <person name="Yagi K."/>
            <person name="Yamanishi H."/>
            <person name="Zabarovsky E."/>
            <person name="Zhu S."/>
            <person name="Zimmer A."/>
            <person name="Hide W."/>
            <person name="Bult C."/>
            <person name="Grimmond S.M."/>
            <person name="Teasdale R.D."/>
            <person name="Liu E.T."/>
            <person name="Brusic V."/>
            <person name="Quackenbush J."/>
            <person name="Wahlestedt C."/>
            <person name="Mattick J.S."/>
            <person name="Hume D.A."/>
            <person name="Kai C."/>
            <person name="Sasaki D."/>
            <person name="Tomaru Y."/>
            <person name="Fukuda S."/>
            <person name="Kanamori-Katayama M."/>
            <person name="Suzuki M."/>
            <person name="Aoki J."/>
            <person name="Arakawa T."/>
            <person name="Iida J."/>
            <person name="Imamura K."/>
            <person name="Itoh M."/>
            <person name="Kato T."/>
            <person name="Kawaji H."/>
            <person name="Kawagashira N."/>
            <person name="Kawashima T."/>
            <person name="Kojima M."/>
            <person name="Kondo S."/>
            <person name="Konno H."/>
            <person name="Nakano K."/>
            <person name="Ninomiya N."/>
            <person name="Nishio T."/>
            <person name="Okada M."/>
            <person name="Plessy C."/>
            <person name="Shibata K."/>
            <person name="Shiraki T."/>
            <person name="Suzuki S."/>
            <person name="Tagami M."/>
            <person name="Waki K."/>
            <person name="Watahiki A."/>
            <person name="Okamura-Oho Y."/>
            <person name="Suzuki H."/>
            <person name="Kawai J."/>
            <person name="Hayashizaki Y."/>
        </authorList>
    </citation>
    <scope>NUCLEOTIDE SEQUENCE [LARGE SCALE MRNA]</scope>
    <source>
        <strain evidence="7">C57BL/6J</strain>
        <strain evidence="8">DBA/2J</strain>
        <tissue evidence="7">Embryo</tissue>
    </source>
</reference>
<reference evidence="5" key="3">
    <citation type="journal article" date="2004" name="Genome Res.">
        <title>The status, quality, and expansion of the NIH full-length cDNA project: the Mammalian Gene Collection (MGC).</title>
        <authorList>
            <consortium name="The MGC Project Team"/>
        </authorList>
    </citation>
    <scope>NUCLEOTIDE SEQUENCE [LARGE SCALE MRNA]</scope>
    <source>
        <strain evidence="5">FVB/N</strain>
        <tissue evidence="5">Mammary tumor</tissue>
    </source>
</reference>
<reference key="4">
    <citation type="journal article" date="2010" name="Cell">
        <title>A tissue-specific atlas of mouse protein phosphorylation and expression.</title>
        <authorList>
            <person name="Huttlin E.L."/>
            <person name="Jedrychowski M.P."/>
            <person name="Elias J.E."/>
            <person name="Goswami T."/>
            <person name="Rad R."/>
            <person name="Beausoleil S.A."/>
            <person name="Villen J."/>
            <person name="Haas W."/>
            <person name="Sowa M.E."/>
            <person name="Gygi S.P."/>
        </authorList>
    </citation>
    <scope>IDENTIFICATION BY MASS SPECTROMETRY [LARGE SCALE ANALYSIS]</scope>
    <source>
        <tissue>Brain</tissue>
        <tissue>Lung</tissue>
        <tissue>Pancreas</tissue>
        <tissue>Spleen</tissue>
        <tissue>Testis</tissue>
    </source>
</reference>
<name>NUDC1_MOUSE</name>
<protein>
    <recommendedName>
        <fullName>NudC domain-containing protein 1</fullName>
    </recommendedName>
</protein>
<accession>Q6PIP5</accession>
<accession>Q3THV3</accession>
<accession>Q71EC1</accession>
<accession>Q8BJZ5</accession>
<proteinExistence type="evidence at protein level"/>
<keyword id="KW-0963">Cytoplasm</keyword>
<keyword id="KW-0539">Nucleus</keyword>
<keyword id="KW-0597">Phosphoprotein</keyword>
<keyword id="KW-1185">Reference proteome</keyword>
<feature type="chain" id="PRO_0000307705" description="NudC domain-containing protein 1">
    <location>
        <begin position="1"/>
        <end position="582"/>
    </location>
</feature>
<feature type="domain" description="CS" evidence="3">
    <location>
        <begin position="272"/>
        <end position="360"/>
    </location>
</feature>
<feature type="modified residue" description="Phosphoserine" evidence="2">
    <location>
        <position position="7"/>
    </location>
</feature>
<feature type="modified residue" description="Phosphoserine" evidence="2">
    <location>
        <position position="387"/>
    </location>
</feature>
<feature type="sequence conflict" description="In Ref. 2; BAE39873/BAE40093." evidence="4" ref="2">
    <original>Y</original>
    <variation>C</variation>
    <location>
        <position position="22"/>
    </location>
</feature>
<feature type="sequence conflict" description="In Ref. 2; BAE39873/BAE40093." evidence="4" ref="2">
    <original>LEP</original>
    <variation>FER</variation>
    <location>
        <begin position="26"/>
        <end position="28"/>
    </location>
</feature>
<feature type="sequence conflict" description="In Ref. 1; AAQ08822." evidence="4" ref="1">
    <original>Q</original>
    <variation>K</variation>
    <location>
        <position position="49"/>
    </location>
</feature>
<feature type="sequence conflict" description="In Ref. 2; BAC36947." evidence="4" ref="2">
    <original>R</original>
    <variation>L</variation>
    <location>
        <position position="113"/>
    </location>
</feature>
<feature type="sequence conflict" description="In Ref. 1; AAQ08822." evidence="4" ref="1">
    <original>I</original>
    <variation>V</variation>
    <location>
        <position position="180"/>
    </location>
</feature>
<feature type="sequence conflict" description="In Ref. 2; BAC36947." evidence="4" ref="2">
    <original>Q</original>
    <variation>K</variation>
    <location>
        <position position="257"/>
    </location>
</feature>
<feature type="sequence conflict" description="In Ref. 1; AAQ08822." evidence="4" ref="1">
    <location>
        <position position="273"/>
    </location>
</feature>
<feature type="sequence conflict" description="In Ref. 3; AAH31583." evidence="4" ref="3">
    <original>Q</original>
    <variation>R</variation>
    <location>
        <position position="302"/>
    </location>
</feature>
<feature type="sequence conflict" description="In Ref. 3; AAH31583." evidence="4" ref="3">
    <original>Q</original>
    <variation>K</variation>
    <location>
        <position position="428"/>
    </location>
</feature>
<feature type="sequence conflict" description="In Ref. 2; BAE39873/BAE40093." evidence="4" ref="2">
    <original>L</original>
    <variation>M</variation>
    <location>
        <position position="441"/>
    </location>
</feature>
<comment type="subcellular location">
    <subcellularLocation>
        <location evidence="1">Cytoplasm</location>
    </subcellularLocation>
    <subcellularLocation>
        <location evidence="1">Nucleus</location>
    </subcellularLocation>
</comment>
<gene>
    <name evidence="9" type="primary">Nudcd1</name>
</gene>
<evidence type="ECO:0000250" key="1"/>
<evidence type="ECO:0000250" key="2">
    <source>
        <dbReference type="UniProtKB" id="Q96RS6"/>
    </source>
</evidence>
<evidence type="ECO:0000255" key="3">
    <source>
        <dbReference type="PROSITE-ProRule" id="PRU00547"/>
    </source>
</evidence>
<evidence type="ECO:0000305" key="4"/>
<evidence type="ECO:0000312" key="5">
    <source>
        <dbReference type="EMBL" id="AAH31583.1"/>
    </source>
</evidence>
<evidence type="ECO:0000312" key="6">
    <source>
        <dbReference type="EMBL" id="AAQ08822.1"/>
    </source>
</evidence>
<evidence type="ECO:0000312" key="7">
    <source>
        <dbReference type="EMBL" id="BAC36947.1"/>
    </source>
</evidence>
<evidence type="ECO:0000312" key="8">
    <source>
        <dbReference type="EMBL" id="BAE39873.1"/>
    </source>
</evidence>
<evidence type="ECO:0000312" key="9">
    <source>
        <dbReference type="MGI" id="MGI:1914679"/>
    </source>
</evidence>
<organism>
    <name type="scientific">Mus musculus</name>
    <name type="common">Mouse</name>
    <dbReference type="NCBI Taxonomy" id="10090"/>
    <lineage>
        <taxon>Eukaryota</taxon>
        <taxon>Metazoa</taxon>
        <taxon>Chordata</taxon>
        <taxon>Craniata</taxon>
        <taxon>Vertebrata</taxon>
        <taxon>Euteleostomi</taxon>
        <taxon>Mammalia</taxon>
        <taxon>Eutheria</taxon>
        <taxon>Euarchontoglires</taxon>
        <taxon>Glires</taxon>
        <taxon>Rodentia</taxon>
        <taxon>Myomorpha</taxon>
        <taxon>Muroidea</taxon>
        <taxon>Muridae</taxon>
        <taxon>Murinae</taxon>
        <taxon>Mus</taxon>
        <taxon>Mus</taxon>
    </lineage>
</organism>